<reference key="1">
    <citation type="submission" date="2006-06" db="EMBL/GenBank/DDBJ databases">
        <title>Complete sequence of Rubrobacter xylanophilus DSM 9941.</title>
        <authorList>
            <consortium name="US DOE Joint Genome Institute"/>
            <person name="Copeland A."/>
            <person name="Lucas S."/>
            <person name="Lapidus A."/>
            <person name="Barry K."/>
            <person name="Detter J.C."/>
            <person name="Glavina del Rio T."/>
            <person name="Hammon N."/>
            <person name="Israni S."/>
            <person name="Dalin E."/>
            <person name="Tice H."/>
            <person name="Pitluck S."/>
            <person name="Munk A.C."/>
            <person name="Brettin T."/>
            <person name="Bruce D."/>
            <person name="Han C."/>
            <person name="Tapia R."/>
            <person name="Gilna P."/>
            <person name="Schmutz J."/>
            <person name="Larimer F."/>
            <person name="Land M."/>
            <person name="Hauser L."/>
            <person name="Kyrpides N."/>
            <person name="Lykidis A."/>
            <person name="da Costa M.S."/>
            <person name="Rainey F.A."/>
            <person name="Empadinhas N."/>
            <person name="Jolivet E."/>
            <person name="Battista J.R."/>
            <person name="Richardson P."/>
        </authorList>
    </citation>
    <scope>NUCLEOTIDE SEQUENCE [LARGE SCALE GENOMIC DNA]</scope>
    <source>
        <strain>DSM 9941 / JCM 11954 / NBRC 16129 / PRD-1</strain>
    </source>
</reference>
<comment type="similarity">
    <text evidence="1">Belongs to the bacterial ribosomal protein bS16 family.</text>
</comment>
<gene>
    <name evidence="1" type="primary">rpsP</name>
    <name type="ordered locus">Rxyl_1388</name>
</gene>
<organism>
    <name type="scientific">Rubrobacter xylanophilus (strain DSM 9941 / JCM 11954 / NBRC 16129 / PRD-1)</name>
    <dbReference type="NCBI Taxonomy" id="266117"/>
    <lineage>
        <taxon>Bacteria</taxon>
        <taxon>Bacillati</taxon>
        <taxon>Actinomycetota</taxon>
        <taxon>Rubrobacteria</taxon>
        <taxon>Rubrobacterales</taxon>
        <taxon>Rubrobacteraceae</taxon>
        <taxon>Rubrobacter</taxon>
    </lineage>
</organism>
<feature type="chain" id="PRO_1000049339" description="Small ribosomal subunit protein bS16">
    <location>
        <begin position="1"/>
        <end position="85"/>
    </location>
</feature>
<evidence type="ECO:0000255" key="1">
    <source>
        <dbReference type="HAMAP-Rule" id="MF_00385"/>
    </source>
</evidence>
<evidence type="ECO:0000305" key="2"/>
<sequence>MAVKIRLARHGAKGKPFYRIVVADARSPRDGKFIDRVGTYDPRKEPSEIKVDAEKAREWLRKGAQPTDQVRNLLRISGVLEEQKG</sequence>
<name>RS16_RUBXD</name>
<dbReference type="EMBL" id="CP000386">
    <property type="protein sequence ID" value="ABG04351.1"/>
    <property type="molecule type" value="Genomic_DNA"/>
</dbReference>
<dbReference type="RefSeq" id="WP_011564368.1">
    <property type="nucleotide sequence ID" value="NC_008148.1"/>
</dbReference>
<dbReference type="SMR" id="Q1AW77"/>
<dbReference type="STRING" id="266117.Rxyl_1388"/>
<dbReference type="KEGG" id="rxy:Rxyl_1388"/>
<dbReference type="eggNOG" id="COG0228">
    <property type="taxonomic scope" value="Bacteria"/>
</dbReference>
<dbReference type="HOGENOM" id="CLU_100590_5_0_11"/>
<dbReference type="OrthoDB" id="9807878at2"/>
<dbReference type="PhylomeDB" id="Q1AW77"/>
<dbReference type="Proteomes" id="UP000006637">
    <property type="component" value="Chromosome"/>
</dbReference>
<dbReference type="GO" id="GO:0005737">
    <property type="term" value="C:cytoplasm"/>
    <property type="evidence" value="ECO:0007669"/>
    <property type="project" value="UniProtKB-ARBA"/>
</dbReference>
<dbReference type="GO" id="GO:0015935">
    <property type="term" value="C:small ribosomal subunit"/>
    <property type="evidence" value="ECO:0007669"/>
    <property type="project" value="TreeGrafter"/>
</dbReference>
<dbReference type="GO" id="GO:0003735">
    <property type="term" value="F:structural constituent of ribosome"/>
    <property type="evidence" value="ECO:0007669"/>
    <property type="project" value="InterPro"/>
</dbReference>
<dbReference type="GO" id="GO:0006412">
    <property type="term" value="P:translation"/>
    <property type="evidence" value="ECO:0007669"/>
    <property type="project" value="UniProtKB-UniRule"/>
</dbReference>
<dbReference type="Gene3D" id="3.30.1320.10">
    <property type="match status" value="1"/>
</dbReference>
<dbReference type="HAMAP" id="MF_00385">
    <property type="entry name" value="Ribosomal_bS16"/>
    <property type="match status" value="1"/>
</dbReference>
<dbReference type="InterPro" id="IPR000307">
    <property type="entry name" value="Ribosomal_bS16"/>
</dbReference>
<dbReference type="InterPro" id="IPR020592">
    <property type="entry name" value="Ribosomal_bS16_CS"/>
</dbReference>
<dbReference type="InterPro" id="IPR023803">
    <property type="entry name" value="Ribosomal_bS16_dom_sf"/>
</dbReference>
<dbReference type="NCBIfam" id="TIGR00002">
    <property type="entry name" value="S16"/>
    <property type="match status" value="1"/>
</dbReference>
<dbReference type="PANTHER" id="PTHR12919">
    <property type="entry name" value="30S RIBOSOMAL PROTEIN S16"/>
    <property type="match status" value="1"/>
</dbReference>
<dbReference type="PANTHER" id="PTHR12919:SF20">
    <property type="entry name" value="SMALL RIBOSOMAL SUBUNIT PROTEIN BS16M"/>
    <property type="match status" value="1"/>
</dbReference>
<dbReference type="Pfam" id="PF00886">
    <property type="entry name" value="Ribosomal_S16"/>
    <property type="match status" value="1"/>
</dbReference>
<dbReference type="SUPFAM" id="SSF54565">
    <property type="entry name" value="Ribosomal protein S16"/>
    <property type="match status" value="1"/>
</dbReference>
<dbReference type="PROSITE" id="PS00732">
    <property type="entry name" value="RIBOSOMAL_S16"/>
    <property type="match status" value="1"/>
</dbReference>
<keyword id="KW-1185">Reference proteome</keyword>
<keyword id="KW-0687">Ribonucleoprotein</keyword>
<keyword id="KW-0689">Ribosomal protein</keyword>
<proteinExistence type="inferred from homology"/>
<protein>
    <recommendedName>
        <fullName evidence="1">Small ribosomal subunit protein bS16</fullName>
    </recommendedName>
    <alternativeName>
        <fullName evidence="2">30S ribosomal protein S16</fullName>
    </alternativeName>
</protein>
<accession>Q1AW77</accession>